<feature type="chain" id="PRO_0000387652" description="Acetaldehyde dehydrogenase 3">
    <location>
        <begin position="1"/>
        <end position="316"/>
    </location>
</feature>
<feature type="active site" description="Acyl-thioester intermediate" evidence="1">
    <location>
        <position position="132"/>
    </location>
</feature>
<feature type="binding site" evidence="1">
    <location>
        <begin position="12"/>
        <end position="15"/>
    </location>
    <ligand>
        <name>NAD(+)</name>
        <dbReference type="ChEBI" id="CHEBI:57540"/>
    </ligand>
</feature>
<feature type="binding site" evidence="1">
    <location>
        <begin position="163"/>
        <end position="171"/>
    </location>
    <ligand>
        <name>NAD(+)</name>
        <dbReference type="ChEBI" id="CHEBI:57540"/>
    </ligand>
</feature>
<feature type="binding site" evidence="1">
    <location>
        <position position="289"/>
    </location>
    <ligand>
        <name>NAD(+)</name>
        <dbReference type="ChEBI" id="CHEBI:57540"/>
    </ligand>
</feature>
<protein>
    <recommendedName>
        <fullName evidence="1">Acetaldehyde dehydrogenase 3</fullName>
        <ecNumber evidence="1">1.2.1.10</ecNumber>
    </recommendedName>
    <alternativeName>
        <fullName evidence="1">Acetaldehyde dehydrogenase [acetylating] 3</fullName>
    </alternativeName>
</protein>
<sequence>MTRKLKAAIIGSGNIGTDLMIKILRHGKNIEMGAMVGIDPHSDGLARASRMGVATTHEGVEGLTRMPGFAEIDFVFDATSAGAHVKNDAFLRSLKPGIRMIDLTPAAIGPYCIPVVNGDMHLDAPNVNMVTCGGQATIPMVAAVSRVAKVHYGEIIASIASKSAGPGTRANIDEFTETTSKAIEVVGGATKGKAIIIMNPAEPPLIMRDTVYTLSALADEAAIAASVEQMAAAVQSYVPGYRLKQQVQFDRIDTPIRIPGVGNALTGLKTSIFLEVEGAAHYLPAYAGNLDIMTSAGLRTAEHMAERMLATLAVAA</sequence>
<gene>
    <name type="primary">mhpF</name>
</gene>
<dbReference type="EC" id="1.2.1.10" evidence="1"/>
<dbReference type="EMBL" id="AB024335">
    <property type="protein sequence ID" value="BAA82883.1"/>
    <property type="molecule type" value="Genomic_DNA"/>
</dbReference>
<dbReference type="RefSeq" id="WP_149354311.1">
    <property type="nucleotide sequence ID" value="NZ_BKBW01000001.1"/>
</dbReference>
<dbReference type="SMR" id="Q9S153"/>
<dbReference type="GO" id="GO:0008774">
    <property type="term" value="F:acetaldehyde dehydrogenase (acetylating) activity"/>
    <property type="evidence" value="ECO:0007669"/>
    <property type="project" value="UniProtKB-UniRule"/>
</dbReference>
<dbReference type="GO" id="GO:0051287">
    <property type="term" value="F:NAD binding"/>
    <property type="evidence" value="ECO:0007669"/>
    <property type="project" value="UniProtKB-UniRule"/>
</dbReference>
<dbReference type="GO" id="GO:0009056">
    <property type="term" value="P:catabolic process"/>
    <property type="evidence" value="ECO:0007669"/>
    <property type="project" value="UniProtKB-KW"/>
</dbReference>
<dbReference type="CDD" id="cd23933">
    <property type="entry name" value="ALDH_C"/>
    <property type="match status" value="1"/>
</dbReference>
<dbReference type="Gene3D" id="3.30.360.10">
    <property type="entry name" value="Dihydrodipicolinate Reductase, domain 2"/>
    <property type="match status" value="1"/>
</dbReference>
<dbReference type="Gene3D" id="3.40.50.720">
    <property type="entry name" value="NAD(P)-binding Rossmann-like Domain"/>
    <property type="match status" value="1"/>
</dbReference>
<dbReference type="HAMAP" id="MF_01657">
    <property type="entry name" value="Ac_ald_DH_ac"/>
    <property type="match status" value="1"/>
</dbReference>
<dbReference type="InterPro" id="IPR003361">
    <property type="entry name" value="Acetaldehyde_dehydrogenase"/>
</dbReference>
<dbReference type="InterPro" id="IPR015426">
    <property type="entry name" value="Acetylaldehyde_DH_C"/>
</dbReference>
<dbReference type="InterPro" id="IPR036291">
    <property type="entry name" value="NAD(P)-bd_dom_sf"/>
</dbReference>
<dbReference type="InterPro" id="IPR000534">
    <property type="entry name" value="Semialdehyde_DH_NAD-bd"/>
</dbReference>
<dbReference type="NCBIfam" id="TIGR03215">
    <property type="entry name" value="ac_ald_DH_ac"/>
    <property type="match status" value="1"/>
</dbReference>
<dbReference type="NCBIfam" id="NF006157">
    <property type="entry name" value="PRK08300.1"/>
    <property type="match status" value="1"/>
</dbReference>
<dbReference type="Pfam" id="PF09290">
    <property type="entry name" value="AcetDehyd-dimer"/>
    <property type="match status" value="1"/>
</dbReference>
<dbReference type="Pfam" id="PF01118">
    <property type="entry name" value="Semialdhyde_dh"/>
    <property type="match status" value="1"/>
</dbReference>
<dbReference type="PIRSF" id="PIRSF015689">
    <property type="entry name" value="Actaldh_dh_actl"/>
    <property type="match status" value="1"/>
</dbReference>
<dbReference type="SMART" id="SM00859">
    <property type="entry name" value="Semialdhyde_dh"/>
    <property type="match status" value="1"/>
</dbReference>
<dbReference type="SUPFAM" id="SSF55347">
    <property type="entry name" value="Glyceraldehyde-3-phosphate dehydrogenase-like, C-terminal domain"/>
    <property type="match status" value="1"/>
</dbReference>
<dbReference type="SUPFAM" id="SSF51735">
    <property type="entry name" value="NAD(P)-binding Rossmann-fold domains"/>
    <property type="match status" value="1"/>
</dbReference>
<keyword id="KW-0058">Aromatic hydrocarbons catabolism</keyword>
<keyword id="KW-0520">NAD</keyword>
<keyword id="KW-0560">Oxidoreductase</keyword>
<reference key="1">
    <citation type="journal article" date="1999" name="Microbiology">
        <title>Genetic organization and characteristics of the 3-(3-hydroxyphenyl)propionic acid degradation pathway of Comamonas testosteroni TA441.</title>
        <authorList>
            <person name="Arai H."/>
            <person name="Yamamoto T."/>
            <person name="Ohishi T."/>
            <person name="Shimizu T."/>
            <person name="Nakata T."/>
            <person name="Kudo T."/>
        </authorList>
    </citation>
    <scope>NUCLEOTIDE SEQUENCE [GENOMIC DNA]</scope>
    <source>
        <strain>TA441</strain>
    </source>
</reference>
<accession>Q9S153</accession>
<organism>
    <name type="scientific">Comamonas testosteroni</name>
    <name type="common">Pseudomonas testosteroni</name>
    <dbReference type="NCBI Taxonomy" id="285"/>
    <lineage>
        <taxon>Bacteria</taxon>
        <taxon>Pseudomonadati</taxon>
        <taxon>Pseudomonadota</taxon>
        <taxon>Betaproteobacteria</taxon>
        <taxon>Burkholderiales</taxon>
        <taxon>Comamonadaceae</taxon>
        <taxon>Comamonas</taxon>
    </lineage>
</organism>
<proteinExistence type="inferred from homology"/>
<evidence type="ECO:0000255" key="1">
    <source>
        <dbReference type="HAMAP-Rule" id="MF_01657"/>
    </source>
</evidence>
<name>ACDH3_COMTE</name>
<comment type="catalytic activity">
    <reaction evidence="1">
        <text>acetaldehyde + NAD(+) + CoA = acetyl-CoA + NADH + H(+)</text>
        <dbReference type="Rhea" id="RHEA:23288"/>
        <dbReference type="ChEBI" id="CHEBI:15343"/>
        <dbReference type="ChEBI" id="CHEBI:15378"/>
        <dbReference type="ChEBI" id="CHEBI:57287"/>
        <dbReference type="ChEBI" id="CHEBI:57288"/>
        <dbReference type="ChEBI" id="CHEBI:57540"/>
        <dbReference type="ChEBI" id="CHEBI:57945"/>
        <dbReference type="EC" id="1.2.1.10"/>
    </reaction>
</comment>
<comment type="similarity">
    <text evidence="1">Belongs to the acetaldehyde dehydrogenase family.</text>
</comment>